<evidence type="ECO:0000250" key="1"/>
<evidence type="ECO:0000255" key="2">
    <source>
        <dbReference type="PROSITE-ProRule" id="PRU00180"/>
    </source>
</evidence>
<evidence type="ECO:0000305" key="3"/>
<reference key="1">
    <citation type="journal article" date="1985" name="Mol. Gen. Genet.">
        <title>Comparative studies on the structural gene for the ribosomal protein S1 in ten bacterial species.</title>
        <authorList>
            <person name="Schnier J."/>
            <person name="Faist G."/>
        </authorList>
    </citation>
    <scope>NUCLEOTIDE SEQUENCE [GENOMIC DNA]</scope>
</reference>
<sequence length="378" mass="41613">ETVTGVINGKVKGGFTVELNGIRAFLPGSLVDVRPVRDTTHLEGKELEFKVIKLDQKRNNVVVSRRAVIESESSAERDQLLENLQEGMEVKGIVKNLTDYGAFVDLGGVDGLLHITDMAWKRVKHPSEIVNVGDEITVKVLKFDRERTRVSLGLKQLGEDPWVAIAKRYPEGTKLTGRVTNLTDYGCFVEIEEGVEGLVHVSEMDWTNKNIHPSKVVNVGDVVEVMVLDIDEERRRISLGLKQCKSNPWQQFAETHNKGDRVEGKIKSITDFGIFIGLEGGIDGLVHLSDISWNVAGEEAVREYKKGDEIAAVVLQVDAERERISLGVKQLAEDPFNNYLAATKKGAIVTGKVTAVDAKGATVELTLGVEGYLRASEA</sequence>
<gene>
    <name type="primary">rpsA</name>
</gene>
<comment type="function">
    <text evidence="1">Binds mRNA; thus facilitating recognition of the initiation point. It is needed to translate mRNA with a short Shine-Dalgarno (SD) purine-rich sequence (By similarity).</text>
</comment>
<comment type="similarity">
    <text evidence="3">Belongs to the bacterial ribosomal protein bS1 family.</text>
</comment>
<name>RS1_PROSP</name>
<protein>
    <recommendedName>
        <fullName evidence="3">Small ribosomal subunit protein bS1</fullName>
    </recommendedName>
    <alternativeName>
        <fullName>30S ribosomal protein S1</fullName>
    </alternativeName>
</protein>
<keyword id="KW-0677">Repeat</keyword>
<keyword id="KW-0687">Ribonucleoprotein</keyword>
<keyword id="KW-0689">Ribosomal protein</keyword>
<keyword id="KW-0694">RNA-binding</keyword>
<accession>P14128</accession>
<feature type="chain" id="PRO_0000196043" description="Small ribosomal subunit protein bS1">
    <location>
        <begin position="1" status="less than"/>
        <end position="378" status="greater than"/>
    </location>
</feature>
<feature type="domain" description="S1 motif 1" evidence="2">
    <location>
        <begin position="1" status="less than"/>
        <end position="66"/>
    </location>
</feature>
<feature type="domain" description="S1 motif 2" evidence="2">
    <location>
        <begin position="87"/>
        <end position="155"/>
    </location>
</feature>
<feature type="domain" description="S1 motif 3" evidence="2">
    <location>
        <begin position="172"/>
        <end position="242"/>
    </location>
</feature>
<feature type="domain" description="S1 motif 4" evidence="2">
    <location>
        <begin position="259"/>
        <end position="329"/>
    </location>
</feature>
<feature type="domain" description="S1 motif 5" evidence="2">
    <location>
        <begin position="346"/>
        <end position="378" status="greater than"/>
    </location>
</feature>
<feature type="non-terminal residue">
    <location>
        <position position="1"/>
    </location>
</feature>
<feature type="non-terminal residue">
    <location>
        <position position="378"/>
    </location>
</feature>
<dbReference type="EMBL" id="X02828">
    <property type="protein sequence ID" value="CAA26596.1"/>
    <property type="molecule type" value="Genomic_DNA"/>
</dbReference>
<dbReference type="SMR" id="P14128"/>
<dbReference type="GO" id="GO:0022627">
    <property type="term" value="C:cytosolic small ribosomal subunit"/>
    <property type="evidence" value="ECO:0007669"/>
    <property type="project" value="TreeGrafter"/>
</dbReference>
<dbReference type="GO" id="GO:0003729">
    <property type="term" value="F:mRNA binding"/>
    <property type="evidence" value="ECO:0007669"/>
    <property type="project" value="TreeGrafter"/>
</dbReference>
<dbReference type="GO" id="GO:0003735">
    <property type="term" value="F:structural constituent of ribosome"/>
    <property type="evidence" value="ECO:0007669"/>
    <property type="project" value="InterPro"/>
</dbReference>
<dbReference type="GO" id="GO:0006412">
    <property type="term" value="P:translation"/>
    <property type="evidence" value="ECO:0007669"/>
    <property type="project" value="InterPro"/>
</dbReference>
<dbReference type="CDD" id="cd04465">
    <property type="entry name" value="S1_RPS1_repeat_ec2_hs2"/>
    <property type="match status" value="1"/>
</dbReference>
<dbReference type="CDD" id="cd05688">
    <property type="entry name" value="S1_RPS1_repeat_ec3"/>
    <property type="match status" value="1"/>
</dbReference>
<dbReference type="CDD" id="cd05689">
    <property type="entry name" value="S1_RPS1_repeat_ec4"/>
    <property type="match status" value="1"/>
</dbReference>
<dbReference type="CDD" id="cd05690">
    <property type="entry name" value="S1_RPS1_repeat_ec5"/>
    <property type="match status" value="1"/>
</dbReference>
<dbReference type="FunFam" id="2.40.50.140:FF:000011">
    <property type="entry name" value="30S ribosomal protein S1"/>
    <property type="match status" value="1"/>
</dbReference>
<dbReference type="FunFam" id="2.40.50.140:FF:000016">
    <property type="entry name" value="30S ribosomal protein S1"/>
    <property type="match status" value="1"/>
</dbReference>
<dbReference type="FunFam" id="2.40.50.140:FF:000017">
    <property type="entry name" value="30S ribosomal protein S1"/>
    <property type="match status" value="1"/>
</dbReference>
<dbReference type="FunFam" id="2.40.50.140:FF:000018">
    <property type="entry name" value="30S ribosomal protein S1"/>
    <property type="match status" value="1"/>
</dbReference>
<dbReference type="Gene3D" id="2.40.50.140">
    <property type="entry name" value="Nucleic acid-binding proteins"/>
    <property type="match status" value="5"/>
</dbReference>
<dbReference type="InterPro" id="IPR012340">
    <property type="entry name" value="NA-bd_OB-fold"/>
</dbReference>
<dbReference type="InterPro" id="IPR050437">
    <property type="entry name" value="Ribos_protein_bS1-like"/>
</dbReference>
<dbReference type="InterPro" id="IPR000110">
    <property type="entry name" value="Ribosomal_bS1"/>
</dbReference>
<dbReference type="InterPro" id="IPR035104">
    <property type="entry name" value="Ribosomal_protein_S1-like"/>
</dbReference>
<dbReference type="InterPro" id="IPR003029">
    <property type="entry name" value="S1_domain"/>
</dbReference>
<dbReference type="NCBIfam" id="NF004952">
    <property type="entry name" value="PRK06299.1-2"/>
    <property type="match status" value="1"/>
</dbReference>
<dbReference type="NCBIfam" id="NF004954">
    <property type="entry name" value="PRK06299.1-4"/>
    <property type="match status" value="1"/>
</dbReference>
<dbReference type="NCBIfam" id="TIGR00717">
    <property type="entry name" value="rpsA"/>
    <property type="match status" value="1"/>
</dbReference>
<dbReference type="PANTHER" id="PTHR10724">
    <property type="entry name" value="30S RIBOSOMAL PROTEIN S1"/>
    <property type="match status" value="1"/>
</dbReference>
<dbReference type="PANTHER" id="PTHR10724:SF7">
    <property type="entry name" value="SMALL RIBOSOMAL SUBUNIT PROTEIN BS1C"/>
    <property type="match status" value="1"/>
</dbReference>
<dbReference type="Pfam" id="PF00575">
    <property type="entry name" value="S1"/>
    <property type="match status" value="5"/>
</dbReference>
<dbReference type="PRINTS" id="PR00681">
    <property type="entry name" value="RIBOSOMALS1"/>
</dbReference>
<dbReference type="SMART" id="SM00316">
    <property type="entry name" value="S1"/>
    <property type="match status" value="4"/>
</dbReference>
<dbReference type="SUPFAM" id="SSF50249">
    <property type="entry name" value="Nucleic acid-binding proteins"/>
    <property type="match status" value="5"/>
</dbReference>
<dbReference type="PROSITE" id="PS50126">
    <property type="entry name" value="S1"/>
    <property type="match status" value="5"/>
</dbReference>
<proteinExistence type="inferred from homology"/>
<organism>
    <name type="scientific">Providencia sp</name>
    <dbReference type="NCBI Taxonomy" id="589"/>
    <lineage>
        <taxon>Bacteria</taxon>
        <taxon>Pseudomonadati</taxon>
        <taxon>Pseudomonadota</taxon>
        <taxon>Gammaproteobacteria</taxon>
        <taxon>Enterobacterales</taxon>
        <taxon>Morganellaceae</taxon>
        <taxon>Providencia</taxon>
    </lineage>
</organism>